<protein>
    <recommendedName>
        <fullName>Uncharacterized protein Rv2575</fullName>
    </recommendedName>
</protein>
<proteinExistence type="evidence at protein level"/>
<feature type="chain" id="PRO_0000104056" description="Uncharacterized protein Rv2575">
    <location>
        <begin position="1"/>
        <end position="293"/>
    </location>
</feature>
<feature type="transmembrane region" description="Helical" evidence="1">
    <location>
        <begin position="25"/>
        <end position="45"/>
    </location>
</feature>
<feature type="region of interest" description="Disordered" evidence="2">
    <location>
        <begin position="1"/>
        <end position="22"/>
    </location>
</feature>
<feature type="region of interest" description="Disordered" evidence="2">
    <location>
        <begin position="243"/>
        <end position="265"/>
    </location>
</feature>
<feature type="compositionally biased region" description="Polar residues" evidence="2">
    <location>
        <begin position="248"/>
        <end position="265"/>
    </location>
</feature>
<name>Y2575_MYCTU</name>
<sequence length="293" mass="30806">MTFNEGVQIDTSTTSTSGSGGGRRLAIGGGLGGLLVVVVAMLLGVDPGGVLSQQPLDTRDHVAPGFDLSQCRTGADANRFVQCRVVATGNSVDAVWKPLLPGYTRPHMRLFSGQVGTGCGPASSEVGPFYCPVDKTAYFDTDFFQVLVTQFGSSGGPFAEEYVVAHEYGHHVQNLLGVLGRAQQGAQGAAGSGVRTELQADCYAGVWAYYASTVKQESTGVPYLEPLSDKDIQDALAAAAAVGDDRIQQQTTGRTNPETWTHGSAAQRQKWFTVGYQTGDPNICDTFSAADLG</sequence>
<gene>
    <name type="ordered locus">Rv2575</name>
    <name type="ORF">MTCY227.26c</name>
</gene>
<reference key="1">
    <citation type="journal article" date="1998" name="Nature">
        <title>Deciphering the biology of Mycobacterium tuberculosis from the complete genome sequence.</title>
        <authorList>
            <person name="Cole S.T."/>
            <person name="Brosch R."/>
            <person name="Parkhill J."/>
            <person name="Garnier T."/>
            <person name="Churcher C.M."/>
            <person name="Harris D.E."/>
            <person name="Gordon S.V."/>
            <person name="Eiglmeier K."/>
            <person name="Gas S."/>
            <person name="Barry C.E. III"/>
            <person name="Tekaia F."/>
            <person name="Badcock K."/>
            <person name="Basham D."/>
            <person name="Brown D."/>
            <person name="Chillingworth T."/>
            <person name="Connor R."/>
            <person name="Davies R.M."/>
            <person name="Devlin K."/>
            <person name="Feltwell T."/>
            <person name="Gentles S."/>
            <person name="Hamlin N."/>
            <person name="Holroyd S."/>
            <person name="Hornsby T."/>
            <person name="Jagels K."/>
            <person name="Krogh A."/>
            <person name="McLean J."/>
            <person name="Moule S."/>
            <person name="Murphy L.D."/>
            <person name="Oliver S."/>
            <person name="Osborne J."/>
            <person name="Quail M.A."/>
            <person name="Rajandream M.A."/>
            <person name="Rogers J."/>
            <person name="Rutter S."/>
            <person name="Seeger K."/>
            <person name="Skelton S."/>
            <person name="Squares S."/>
            <person name="Squares R."/>
            <person name="Sulston J.E."/>
            <person name="Taylor K."/>
            <person name="Whitehead S."/>
            <person name="Barrell B.G."/>
        </authorList>
    </citation>
    <scope>NUCLEOTIDE SEQUENCE [LARGE SCALE GENOMIC DNA]</scope>
    <source>
        <strain>ATCC 25618 / H37Rv</strain>
    </source>
</reference>
<reference key="2">
    <citation type="journal article" date="2011" name="Mol. Cell. Proteomics">
        <title>Proteogenomic analysis of Mycobacterium tuberculosis by high resolution mass spectrometry.</title>
        <authorList>
            <person name="Kelkar D.S."/>
            <person name="Kumar D."/>
            <person name="Kumar P."/>
            <person name="Balakrishnan L."/>
            <person name="Muthusamy B."/>
            <person name="Yadav A.K."/>
            <person name="Shrivastava P."/>
            <person name="Marimuthu A."/>
            <person name="Anand S."/>
            <person name="Sundaram H."/>
            <person name="Kingsbury R."/>
            <person name="Harsha H.C."/>
            <person name="Nair B."/>
            <person name="Prasad T.S."/>
            <person name="Chauhan D.S."/>
            <person name="Katoch K."/>
            <person name="Katoch V.M."/>
            <person name="Kumar P."/>
            <person name="Chaerkady R."/>
            <person name="Ramachandran S."/>
            <person name="Dash D."/>
            <person name="Pandey A."/>
        </authorList>
    </citation>
    <scope>IDENTIFICATION BY MASS SPECTROMETRY [LARGE SCALE ANALYSIS]</scope>
    <source>
        <strain>ATCC 25618 / H37Rv</strain>
    </source>
</reference>
<evidence type="ECO:0000255" key="1"/>
<evidence type="ECO:0000256" key="2">
    <source>
        <dbReference type="SAM" id="MobiDB-lite"/>
    </source>
</evidence>
<evidence type="ECO:0000305" key="3"/>
<dbReference type="EMBL" id="AL123456">
    <property type="protein sequence ID" value="CCP45371.1"/>
    <property type="molecule type" value="Genomic_DNA"/>
</dbReference>
<dbReference type="PIR" id="F70724">
    <property type="entry name" value="F70724"/>
</dbReference>
<dbReference type="RefSeq" id="NP_217091.1">
    <property type="nucleotide sequence ID" value="NC_000962.3"/>
</dbReference>
<dbReference type="RefSeq" id="WP_003899384.1">
    <property type="nucleotide sequence ID" value="NZ_NVQJ01000023.1"/>
</dbReference>
<dbReference type="STRING" id="83332.Rv2575"/>
<dbReference type="PaxDb" id="83332-Rv2575"/>
<dbReference type="DNASU" id="888178"/>
<dbReference type="GeneID" id="888178"/>
<dbReference type="KEGG" id="mtu:Rv2575"/>
<dbReference type="KEGG" id="mtv:RVBD_2575"/>
<dbReference type="TubercuList" id="Rv2575"/>
<dbReference type="eggNOG" id="COG2321">
    <property type="taxonomic scope" value="Bacteria"/>
</dbReference>
<dbReference type="InParanoid" id="P9WL85"/>
<dbReference type="OrthoDB" id="9774900at2"/>
<dbReference type="PhylomeDB" id="P9WL85"/>
<dbReference type="Proteomes" id="UP000001584">
    <property type="component" value="Chromosome"/>
</dbReference>
<dbReference type="GO" id="GO:0005576">
    <property type="term" value="C:extracellular region"/>
    <property type="evidence" value="ECO:0007005"/>
    <property type="project" value="MTBBASE"/>
</dbReference>
<dbReference type="GO" id="GO:0016020">
    <property type="term" value="C:membrane"/>
    <property type="evidence" value="ECO:0007669"/>
    <property type="project" value="UniProtKB-SubCell"/>
</dbReference>
<dbReference type="InterPro" id="IPR007343">
    <property type="entry name" value="Uncharacterised_pept_Zn_put"/>
</dbReference>
<dbReference type="PANTHER" id="PTHR30168:SF0">
    <property type="entry name" value="INNER MEMBRANE PROTEIN"/>
    <property type="match status" value="1"/>
</dbReference>
<dbReference type="PANTHER" id="PTHR30168">
    <property type="entry name" value="PUTATIVE MEMBRANE PROTEIN YPFJ"/>
    <property type="match status" value="1"/>
</dbReference>
<dbReference type="Pfam" id="PF04228">
    <property type="entry name" value="Zn_peptidase"/>
    <property type="match status" value="1"/>
</dbReference>
<dbReference type="SUPFAM" id="SSF55486">
    <property type="entry name" value="Metalloproteases ('zincins'), catalytic domain"/>
    <property type="match status" value="1"/>
</dbReference>
<organism>
    <name type="scientific">Mycobacterium tuberculosis (strain ATCC 25618 / H37Rv)</name>
    <dbReference type="NCBI Taxonomy" id="83332"/>
    <lineage>
        <taxon>Bacteria</taxon>
        <taxon>Bacillati</taxon>
        <taxon>Actinomycetota</taxon>
        <taxon>Actinomycetes</taxon>
        <taxon>Mycobacteriales</taxon>
        <taxon>Mycobacteriaceae</taxon>
        <taxon>Mycobacterium</taxon>
        <taxon>Mycobacterium tuberculosis complex</taxon>
    </lineage>
</organism>
<comment type="subcellular location">
    <subcellularLocation>
        <location evidence="3">Membrane</location>
        <topology evidence="3">Single-pass membrane protein</topology>
    </subcellularLocation>
</comment>
<accession>P9WL85</accession>
<accession>L0TA92</accession>
<accession>P65019</accession>
<accession>Q50646</accession>
<keyword id="KW-0472">Membrane</keyword>
<keyword id="KW-1185">Reference proteome</keyword>
<keyword id="KW-0812">Transmembrane</keyword>
<keyword id="KW-1133">Transmembrane helix</keyword>